<organism>
    <name type="scientific">Mycolicibacterium gilvum (strain PYR-GCK)</name>
    <name type="common">Mycobacterium gilvum (strain PYR-GCK)</name>
    <dbReference type="NCBI Taxonomy" id="350054"/>
    <lineage>
        <taxon>Bacteria</taxon>
        <taxon>Bacillati</taxon>
        <taxon>Actinomycetota</taxon>
        <taxon>Actinomycetes</taxon>
        <taxon>Mycobacteriales</taxon>
        <taxon>Mycobacteriaceae</taxon>
        <taxon>Mycolicibacterium</taxon>
    </lineage>
</organism>
<evidence type="ECO:0000255" key="1">
    <source>
        <dbReference type="HAMAP-Rule" id="MF_01696"/>
    </source>
</evidence>
<accession>A4T907</accession>
<comment type="function">
    <text evidence="1">Catalyzes the deacetylation of 1D-myo-inositol 2-acetamido-2-deoxy-alpha-D-glucopyranoside (GlcNAc-Ins) in the mycothiol biosynthesis pathway.</text>
</comment>
<comment type="catalytic activity">
    <reaction evidence="1">
        <text>1D-myo-inositol 2-acetamido-2-deoxy-alpha-D-glucopyranoside + H2O = 1D-myo-inositol 2-amino-2-deoxy-alpha-D-glucopyranoside + acetate</text>
        <dbReference type="Rhea" id="RHEA:26180"/>
        <dbReference type="ChEBI" id="CHEBI:15377"/>
        <dbReference type="ChEBI" id="CHEBI:30089"/>
        <dbReference type="ChEBI" id="CHEBI:52442"/>
        <dbReference type="ChEBI" id="CHEBI:58886"/>
        <dbReference type="EC" id="3.5.1.103"/>
    </reaction>
</comment>
<comment type="cofactor">
    <cofactor evidence="1">
        <name>Zn(2+)</name>
        <dbReference type="ChEBI" id="CHEBI:29105"/>
    </cofactor>
    <text evidence="1">Binds 1 zinc ion per subunit.</text>
</comment>
<comment type="similarity">
    <text evidence="1">Belongs to the MshB deacetylase family.</text>
</comment>
<name>MSHB_MYCGI</name>
<dbReference type="EC" id="3.5.1.103" evidence="1"/>
<dbReference type="EMBL" id="CP000656">
    <property type="protein sequence ID" value="ABP44643.1"/>
    <property type="molecule type" value="Genomic_DNA"/>
</dbReference>
<dbReference type="SMR" id="A4T907"/>
<dbReference type="STRING" id="350054.Mflv_2165"/>
<dbReference type="KEGG" id="mgi:Mflv_2165"/>
<dbReference type="eggNOG" id="COG2120">
    <property type="taxonomic scope" value="Bacteria"/>
</dbReference>
<dbReference type="HOGENOM" id="CLU_049311_2_1_11"/>
<dbReference type="OrthoDB" id="158614at2"/>
<dbReference type="GO" id="GO:0035595">
    <property type="term" value="F:N-acetylglucosaminylinositol deacetylase activity"/>
    <property type="evidence" value="ECO:0007669"/>
    <property type="project" value="UniProtKB-EC"/>
</dbReference>
<dbReference type="GO" id="GO:0008270">
    <property type="term" value="F:zinc ion binding"/>
    <property type="evidence" value="ECO:0007669"/>
    <property type="project" value="UniProtKB-UniRule"/>
</dbReference>
<dbReference type="GO" id="GO:0010125">
    <property type="term" value="P:mycothiol biosynthetic process"/>
    <property type="evidence" value="ECO:0007669"/>
    <property type="project" value="UniProtKB-UniRule"/>
</dbReference>
<dbReference type="Gene3D" id="3.40.50.10320">
    <property type="entry name" value="LmbE-like"/>
    <property type="match status" value="1"/>
</dbReference>
<dbReference type="HAMAP" id="MF_01696">
    <property type="entry name" value="MshB"/>
    <property type="match status" value="1"/>
</dbReference>
<dbReference type="InterPro" id="IPR003737">
    <property type="entry name" value="GlcNAc_PI_deacetylase-related"/>
</dbReference>
<dbReference type="InterPro" id="IPR024078">
    <property type="entry name" value="LmbE-like_dom_sf"/>
</dbReference>
<dbReference type="InterPro" id="IPR017810">
    <property type="entry name" value="Mycothiol_biosynthesis_MshB"/>
</dbReference>
<dbReference type="NCBIfam" id="TIGR03445">
    <property type="entry name" value="mycothiol_MshB"/>
    <property type="match status" value="1"/>
</dbReference>
<dbReference type="PANTHER" id="PTHR12993:SF26">
    <property type="entry name" value="1D-MYO-INOSITOL 2-ACETAMIDO-2-DEOXY-ALPHA-D-GLUCOPYRANOSIDE DEACETYLASE"/>
    <property type="match status" value="1"/>
</dbReference>
<dbReference type="PANTHER" id="PTHR12993">
    <property type="entry name" value="N-ACETYLGLUCOSAMINYL-PHOSPHATIDYLINOSITOL DE-N-ACETYLASE-RELATED"/>
    <property type="match status" value="1"/>
</dbReference>
<dbReference type="Pfam" id="PF02585">
    <property type="entry name" value="PIG-L"/>
    <property type="match status" value="1"/>
</dbReference>
<dbReference type="SUPFAM" id="SSF102588">
    <property type="entry name" value="LmbE-like"/>
    <property type="match status" value="1"/>
</dbReference>
<reference key="1">
    <citation type="submission" date="2007-04" db="EMBL/GenBank/DDBJ databases">
        <title>Complete sequence of chromosome of Mycobacterium gilvum PYR-GCK.</title>
        <authorList>
            <consortium name="US DOE Joint Genome Institute"/>
            <person name="Copeland A."/>
            <person name="Lucas S."/>
            <person name="Lapidus A."/>
            <person name="Barry K."/>
            <person name="Detter J.C."/>
            <person name="Glavina del Rio T."/>
            <person name="Hammon N."/>
            <person name="Israni S."/>
            <person name="Dalin E."/>
            <person name="Tice H."/>
            <person name="Pitluck S."/>
            <person name="Chain P."/>
            <person name="Malfatti S."/>
            <person name="Shin M."/>
            <person name="Vergez L."/>
            <person name="Schmutz J."/>
            <person name="Larimer F."/>
            <person name="Land M."/>
            <person name="Hauser L."/>
            <person name="Kyrpides N."/>
            <person name="Mikhailova N."/>
            <person name="Miller C."/>
            <person name="Richardson P."/>
        </authorList>
    </citation>
    <scope>NUCLEOTIDE SEQUENCE [LARGE SCALE GENOMIC DNA]</scope>
    <source>
        <strain>PYR-GCK</strain>
    </source>
</reference>
<gene>
    <name evidence="1" type="primary">mshB</name>
    <name type="ordered locus">Mflv_2165</name>
</gene>
<keyword id="KW-0378">Hydrolase</keyword>
<keyword id="KW-0479">Metal-binding</keyword>
<keyword id="KW-0862">Zinc</keyword>
<protein>
    <recommendedName>
        <fullName evidence="1">1D-myo-inositol 2-acetamido-2-deoxy-alpha-D-glucopyranoside deacetylase</fullName>
        <shortName evidence="1">GlcNAc-Ins deacetylase</shortName>
        <ecNumber evidence="1">3.5.1.103</ecNumber>
    </recommendedName>
    <alternativeName>
        <fullName>N-acetyl-1-D-myo-inositol 2-amino-2-deoxy-alpha-D-glucopyranoside deacetylase</fullName>
    </alternativeName>
</protein>
<proteinExistence type="inferred from homology"/>
<feature type="chain" id="PRO_0000400197" description="1D-myo-inositol 2-acetamido-2-deoxy-alpha-D-glucopyranoside deacetylase">
    <location>
        <begin position="1"/>
        <end position="284"/>
    </location>
</feature>
<feature type="binding site" evidence="1">
    <location>
        <position position="12"/>
    </location>
    <ligand>
        <name>Zn(2+)</name>
        <dbReference type="ChEBI" id="CHEBI:29105"/>
    </ligand>
</feature>
<feature type="binding site" evidence="1">
    <location>
        <position position="15"/>
    </location>
    <ligand>
        <name>Zn(2+)</name>
        <dbReference type="ChEBI" id="CHEBI:29105"/>
    </ligand>
</feature>
<feature type="binding site" evidence="1">
    <location>
        <position position="146"/>
    </location>
    <ligand>
        <name>Zn(2+)</name>
        <dbReference type="ChEBI" id="CHEBI:29105"/>
    </ligand>
</feature>
<sequence length="284" mass="30478">METPRLLFVHAHPDDETLTTGATIAHYTARGAEVQVITCTLGEEGEVIGDRWAQLAVDHADQLGGYRIGELTAALAALGVDRPRYLGGAGRWRDSGMEGTPARRRERFVDGDVAEQTAVLAAAIDELRPHVVVTYDPNGGYGHPDHIHTHRLTTAAVEAAAWQVPKFYWTVTSDSALRTGIAALTDVPDGWVTLTADDLPLVGFTDDTIDAALDLGAHSAARVAAMHAHQTQITVAPDGRSFALSNDIALPVDATEYYVLARGEAGERDARGWETDLLAGLNLR</sequence>